<reference key="1">
    <citation type="journal article" date="2015" name="Genome Announc.">
        <title>Genome sequence of the AIDS-associated pathogen Penicillium marneffei (ATCC18224) and its near taxonomic relative Talaromyces stipitatus (ATCC10500).</title>
        <authorList>
            <person name="Nierman W.C."/>
            <person name="Fedorova-Abrams N.D."/>
            <person name="Andrianopoulos A."/>
        </authorList>
    </citation>
    <scope>NUCLEOTIDE SEQUENCE [LARGE SCALE GENOMIC DNA]</scope>
    <source>
        <strain>ATCC 10500 / CBS 375.48 / QM 6759 / NRRL 1006</strain>
    </source>
</reference>
<organism>
    <name type="scientific">Talaromyces stipitatus (strain ATCC 10500 / CBS 375.48 / QM 6759 / NRRL 1006)</name>
    <name type="common">Penicillium stipitatum</name>
    <dbReference type="NCBI Taxonomy" id="441959"/>
    <lineage>
        <taxon>Eukaryota</taxon>
        <taxon>Fungi</taxon>
        <taxon>Dikarya</taxon>
        <taxon>Ascomycota</taxon>
        <taxon>Pezizomycotina</taxon>
        <taxon>Eurotiomycetes</taxon>
        <taxon>Eurotiomycetidae</taxon>
        <taxon>Eurotiales</taxon>
        <taxon>Trichocomaceae</taxon>
        <taxon>Talaromyces</taxon>
        <taxon>Talaromyces sect. Talaromyces</taxon>
    </lineage>
</organism>
<accession>B8M9Q9</accession>
<sequence>MLAKPLTAIWTLFLLISTAQAQFQFFEQMFGGGGAQQGHPHEQEASSDSAWYQRTWEGAHCTRYLCPGTLSCVHFPHHCPCPHPNVEDKVELGEGSAVCVSRGGFAPGEAARKIELARKGLL</sequence>
<comment type="function">
    <text evidence="1">Probable component of the endoplasmic reticulum-associated degradation (ERAD) pathway.</text>
</comment>
<comment type="similarity">
    <text evidence="3">Belongs to the LCL2 family.</text>
</comment>
<protein>
    <recommendedName>
        <fullName>Long chronological lifespan protein 2</fullName>
    </recommendedName>
</protein>
<proteinExistence type="inferred from homology"/>
<feature type="signal peptide" evidence="2">
    <location>
        <begin position="1"/>
        <end position="21"/>
    </location>
</feature>
<feature type="chain" id="PRO_0000408629" description="Long chronological lifespan protein 2">
    <location>
        <begin position="22"/>
        <end position="122"/>
    </location>
</feature>
<evidence type="ECO:0000250" key="1"/>
<evidence type="ECO:0000255" key="2"/>
<evidence type="ECO:0000305" key="3"/>
<keyword id="KW-1185">Reference proteome</keyword>
<keyword id="KW-0732">Signal</keyword>
<name>LCL2_TALSN</name>
<dbReference type="EMBL" id="EQ962655">
    <property type="protein sequence ID" value="EED18061.1"/>
    <property type="molecule type" value="Genomic_DNA"/>
</dbReference>
<dbReference type="RefSeq" id="XP_002482053.1">
    <property type="nucleotide sequence ID" value="XM_002482008.1"/>
</dbReference>
<dbReference type="STRING" id="441959.B8M9Q9"/>
<dbReference type="GeneID" id="8099755"/>
<dbReference type="VEuPathDB" id="FungiDB:TSTA_118310"/>
<dbReference type="eggNOG" id="ENOG502S416">
    <property type="taxonomic scope" value="Eukaryota"/>
</dbReference>
<dbReference type="HOGENOM" id="CLU_142363_0_0_1"/>
<dbReference type="InParanoid" id="B8M9Q9"/>
<dbReference type="OMA" id="DNYLCPD"/>
<dbReference type="OrthoDB" id="2234316at2759"/>
<dbReference type="PhylomeDB" id="B8M9Q9"/>
<dbReference type="Proteomes" id="UP000001745">
    <property type="component" value="Unassembled WGS sequence"/>
</dbReference>
<dbReference type="GO" id="GO:0036503">
    <property type="term" value="P:ERAD pathway"/>
    <property type="evidence" value="ECO:0007669"/>
    <property type="project" value="TreeGrafter"/>
</dbReference>
<dbReference type="CDD" id="cd23996">
    <property type="entry name" value="LCL2-like"/>
    <property type="match status" value="1"/>
</dbReference>
<dbReference type="InterPro" id="IPR034543">
    <property type="entry name" value="LCL2"/>
</dbReference>
<dbReference type="PANTHER" id="PTHR38425">
    <property type="entry name" value="LONG CHRONOLOGICAL LIFESPAN PROTEIN 2"/>
    <property type="match status" value="1"/>
</dbReference>
<dbReference type="PANTHER" id="PTHR38425:SF1">
    <property type="entry name" value="LONG CHRONOLOGICAL LIFESPAN PROTEIN 2"/>
    <property type="match status" value="1"/>
</dbReference>
<gene>
    <name type="primary">lcl2</name>
    <name type="ORF">TSTA_118310</name>
</gene>